<feature type="chain" id="PRO_0000276224" description="Photosystem II reaction center protein L">
    <location>
        <begin position="1"/>
        <end position="38"/>
    </location>
</feature>
<feature type="transmembrane region" description="Helical" evidence="1">
    <location>
        <begin position="17"/>
        <end position="37"/>
    </location>
</feature>
<comment type="function">
    <text evidence="1">One of the components of the core complex of photosystem II (PSII). PSII is a light-driven water:plastoquinone oxidoreductase that uses light energy to abstract electrons from H(2)O, generating O(2) and a proton gradient subsequently used for ATP formation. It consists of a core antenna complex that captures photons, and an electron transfer chain that converts photonic excitation into a charge separation. This subunit is found at the monomer-monomer interface and is required for correct PSII assembly and/or dimerization.</text>
</comment>
<comment type="subunit">
    <text evidence="1">PSII is composed of 1 copy each of membrane proteins PsbA, PsbB, PsbC, PsbD, PsbE, PsbF, PsbH, PsbI, PsbJ, PsbK, PsbL, PsbM, PsbT, PsbX, PsbY, PsbZ, Psb30/Ycf12, at least 3 peripheral proteins of the oxygen-evolving complex and a large number of cofactors. It forms dimeric complexes.</text>
</comment>
<comment type="subcellular location">
    <subcellularLocation>
        <location evidence="1">Plastid</location>
        <location evidence="1">Chloroplast thylakoid membrane</location>
        <topology evidence="1">Single-pass membrane protein</topology>
    </subcellularLocation>
</comment>
<comment type="similarity">
    <text evidence="1">Belongs to the PsbL family.</text>
</comment>
<reference key="1">
    <citation type="journal article" date="2005" name="BMC Biol.">
        <title>The complete chloroplast DNA sequences of the charophycean green algae Staurastrum and Zygnema reveal that the chloroplast genome underwent extensive changes during the evolution of the Zygnematales.</title>
        <authorList>
            <person name="Turmel M."/>
            <person name="Otis C."/>
            <person name="Lemieux C."/>
        </authorList>
    </citation>
    <scope>NUCLEOTIDE SEQUENCE [LARGE SCALE GENOMIC DNA]</scope>
</reference>
<keyword id="KW-0150">Chloroplast</keyword>
<keyword id="KW-0472">Membrane</keyword>
<keyword id="KW-0602">Photosynthesis</keyword>
<keyword id="KW-0604">Photosystem II</keyword>
<keyword id="KW-0934">Plastid</keyword>
<keyword id="KW-0674">Reaction center</keyword>
<keyword id="KW-0793">Thylakoid</keyword>
<keyword id="KW-0812">Transmembrane</keyword>
<keyword id="KW-1133">Transmembrane helix</keyword>
<dbReference type="EMBL" id="AY958085">
    <property type="protein sequence ID" value="AAX45731.1"/>
    <property type="molecule type" value="Genomic_DNA"/>
</dbReference>
<dbReference type="RefSeq" id="YP_636401.1">
    <property type="nucleotide sequence ID" value="NC_008116.1"/>
</dbReference>
<dbReference type="SMR" id="Q32RX5"/>
<dbReference type="GeneID" id="4108690"/>
<dbReference type="GO" id="GO:0009535">
    <property type="term" value="C:chloroplast thylakoid membrane"/>
    <property type="evidence" value="ECO:0007669"/>
    <property type="project" value="UniProtKB-SubCell"/>
</dbReference>
<dbReference type="GO" id="GO:0009539">
    <property type="term" value="C:photosystem II reaction center"/>
    <property type="evidence" value="ECO:0007669"/>
    <property type="project" value="InterPro"/>
</dbReference>
<dbReference type="GO" id="GO:0015979">
    <property type="term" value="P:photosynthesis"/>
    <property type="evidence" value="ECO:0007669"/>
    <property type="project" value="UniProtKB-UniRule"/>
</dbReference>
<dbReference type="HAMAP" id="MF_01317">
    <property type="entry name" value="PSII_PsbL"/>
    <property type="match status" value="1"/>
</dbReference>
<dbReference type="InterPro" id="IPR003372">
    <property type="entry name" value="PSII_PsbL"/>
</dbReference>
<dbReference type="InterPro" id="IPR037266">
    <property type="entry name" value="PSII_PsbL_sf"/>
</dbReference>
<dbReference type="Pfam" id="PF02419">
    <property type="entry name" value="PsbL"/>
    <property type="match status" value="1"/>
</dbReference>
<dbReference type="SUPFAM" id="SSF161017">
    <property type="entry name" value="Photosystem II reaction center protein L, PsbL"/>
    <property type="match status" value="1"/>
</dbReference>
<proteinExistence type="inferred from homology"/>
<evidence type="ECO:0000255" key="1">
    <source>
        <dbReference type="HAMAP-Rule" id="MF_01317"/>
    </source>
</evidence>
<accession>Q32RX5</accession>
<geneLocation type="chloroplast"/>
<protein>
    <recommendedName>
        <fullName evidence="1">Photosystem II reaction center protein L</fullName>
        <shortName evidence="1">PSII-L</shortName>
    </recommendedName>
</protein>
<organism>
    <name type="scientific">Staurastrum punctulatum</name>
    <name type="common">Green alga</name>
    <name type="synonym">Cosmoastrum punctulatum</name>
    <dbReference type="NCBI Taxonomy" id="102822"/>
    <lineage>
        <taxon>Eukaryota</taxon>
        <taxon>Viridiplantae</taxon>
        <taxon>Streptophyta</taxon>
        <taxon>Zygnematophyceae</taxon>
        <taxon>Zygnematophycidae</taxon>
        <taxon>Desmidiales</taxon>
        <taxon>Desmidiaceae</taxon>
        <taxon>Staurastrum</taxon>
    </lineage>
</organism>
<name>PSBL_STAPU</name>
<gene>
    <name evidence="1" type="primary">psbL</name>
</gene>
<sequence>MTTPNPNKQGAELSRTGLYWGLLLIFVLAVLFSSYFFN</sequence>